<accession>O43390</accession>
<accession>Q2L7G6</accession>
<accession>Q5TEH1</accession>
<accession>Q9BV64</accession>
<accession>S4R3J4</accession>
<name>HNRPR_HUMAN</name>
<comment type="function">
    <text>Component of ribonucleosomes, which are complexes of at least 20 other different heterogeneous nuclear ribonucleoproteins (hnRNP). hnRNP play an important role in processing of precursor mRNA in the nucleus.</text>
</comment>
<comment type="subunit">
    <text evidence="5 6 7">Identified in the spliceosome C complex. Identified in a IGF2BP1-dependent mRNP granule complex containing untranslated mRNAs. Interacts with GTPBP1.</text>
</comment>
<comment type="interaction">
    <interactant intactId="EBI-713419">
        <id>O43390</id>
    </interactant>
    <interactant intactId="EBI-742808">
        <id>Q5VWX1</id>
        <label>KHDRBS2</label>
    </interactant>
    <organismsDiffer>false</organismsDiffer>
    <experiments>3</experiments>
</comment>
<comment type="interaction">
    <interactant intactId="EBI-713419">
        <id>O43390</id>
    </interactant>
    <interactant intactId="EBI-389883">
        <id>P16333</id>
        <label>NCK1</label>
    </interactant>
    <organismsDiffer>false</organismsDiffer>
    <experiments>2</experiments>
</comment>
<comment type="interaction">
    <interactant intactId="EBI-713419">
        <id>O43390</id>
    </interactant>
    <interactant intactId="EBI-78738">
        <id>Q99873</id>
        <label>PRMT1</label>
    </interactant>
    <organismsDiffer>false</organismsDiffer>
    <experiments>5</experiments>
</comment>
<comment type="interaction">
    <interactant intactId="EBI-12236340">
        <id>O43390-2</id>
    </interactant>
    <interactant intactId="EBI-10329013">
        <id>Q9Y5E9</id>
        <label>PCDHB14</label>
    </interactant>
    <organismsDiffer>false</organismsDiffer>
    <experiments>3</experiments>
</comment>
<comment type="interaction">
    <interactant intactId="EBI-12236340">
        <id>O43390-2</id>
    </interactant>
    <interactant intactId="EBI-740818">
        <id>Q9Y272</id>
        <label>RASD1</label>
    </interactant>
    <organismsDiffer>false</organismsDiffer>
    <experiments>3</experiments>
</comment>
<comment type="interaction">
    <interactant intactId="EBI-12236340">
        <id>O43390-2</id>
    </interactant>
    <interactant intactId="EBI-372899">
        <id>Q13148</id>
        <label>TARDBP</label>
    </interactant>
    <organismsDiffer>false</organismsDiffer>
    <experiments>3</experiments>
</comment>
<comment type="subcellular location">
    <subcellularLocation>
        <location evidence="8">Nucleus</location>
    </subcellularLocation>
    <subcellularLocation>
        <location evidence="1">Microsome</location>
    </subcellularLocation>
    <subcellularLocation>
        <location evidence="6">Nucleus</location>
        <location evidence="6">Nucleoplasm</location>
    </subcellularLocation>
    <subcellularLocation>
        <location evidence="6">Cytoplasm</location>
    </subcellularLocation>
    <text evidence="1 6">Localized in cytoplasmic mRNP granules containing untranslated mRNAs. The tyrosine phosphorylated form bound to RNA is found in microsomes (By similarity).</text>
</comment>
<comment type="alternative products">
    <event type="alternative splicing"/>
    <isoform>
        <id>O43390-1</id>
        <name>1</name>
        <sequence type="displayed"/>
    </isoform>
    <isoform>
        <id>O43390-2</id>
        <name>2</name>
        <sequence type="described" ref="VSP_038360"/>
    </isoform>
    <isoform>
        <id>O43390-3</id>
        <name>3</name>
        <name>hnRNP-R2</name>
        <sequence type="described" ref="VSP_047647"/>
    </isoform>
    <isoform>
        <id>O43390-4</id>
        <name>4</name>
        <sequence type="described" ref="VSP_054703 VSP_038360"/>
    </isoform>
</comment>
<comment type="disease" evidence="8">
    <disease id="DI-06523">
        <name>Neurodevelopmental disorder with dysmorphic facies and skeletal and brain abnormalities</name>
        <acronym>NEDDFSB</acronym>
        <description>An autosomal dominant disorder characterized by global developmental delay with impaired intellectual development and poor or absent speech, corpus callosum structural defects and cerebellar hypoplasia on brain imaging, poor overall growth, facial dysmorphism, and skeletal defects. Variable additional findings include hypotonia, seizures, and ocular defects.</description>
        <dbReference type="MIM" id="620073"/>
    </disease>
    <text>The disease is caused by variants affecting the gene represented in this entry.</text>
</comment>
<comment type="miscellaneous">
    <molecule>Isoform 3</molecule>
    <text evidence="12">Expression is low and neural-specific.</text>
</comment>
<organism>
    <name type="scientific">Homo sapiens</name>
    <name type="common">Human</name>
    <dbReference type="NCBI Taxonomy" id="9606"/>
    <lineage>
        <taxon>Eukaryota</taxon>
        <taxon>Metazoa</taxon>
        <taxon>Chordata</taxon>
        <taxon>Craniata</taxon>
        <taxon>Vertebrata</taxon>
        <taxon>Euteleostomi</taxon>
        <taxon>Mammalia</taxon>
        <taxon>Eutheria</taxon>
        <taxon>Euarchontoglires</taxon>
        <taxon>Primates</taxon>
        <taxon>Haplorrhini</taxon>
        <taxon>Catarrhini</taxon>
        <taxon>Hominidae</taxon>
        <taxon>Homo</taxon>
    </lineage>
</organism>
<sequence length="633" mass="70943">MANQVNGNAVQLKEEEEPMDTSSVTHTEHYKTLIEAGLPQKVAERLDEIFQTGLVAYVDLDERAIDALREFNEEGALSVLQQFKESDLSHVQNKSAFLCGVMKTYRQREKQGSKVQESTKGPDEAKIKALLERTGYTLDVTTGQRKYGGPPPDSVYSGVQPGIGTEVFVGKIPRDLYEDELVPLFEKAGPIWDLRLMMDPLSGQNRGYAFITFCGKEAAQEAVKLCDSYEIRPGKHLGVCISVANNRLFVGSIPKNKTKENILEEFSKVTEGLVDVILYHQPDDKKKNRGFCFLEYEDHKSAAQARRRLMSGKVKVWGNVVTVEWADPVEEPDPEVMAKVKVLFVRNLATTVTEEILEKSFSEFGKLERVKKLKDYAFVHFEDRGAAVKAMDEMNGKEIEGEEIEIVLAKPPDKKRKERQAARQASRSTAYEDYYYHPPPRMPPPIRGRGRGGGRGGYGYPPDYYGYEDYYDDYYGYDYHDYRGGYEDPYYGYDDGYAVRGRGGGRGGRGAPPPPRGRGAPPPRGRAGYSQRGAPLGPPRGSRGGRGGPAQQQRGRGSRGSRGNRGGNVGGKRKADGYNQPDSKRRQTNNQQNWGSQPIAQQPLQQGGDYSGNYGYNNDNQEFYQDTYGQQWK</sequence>
<keyword id="KW-0002">3D-structure</keyword>
<keyword id="KW-0007">Acetylation</keyword>
<keyword id="KW-0025">Alternative splicing</keyword>
<keyword id="KW-0963">Cytoplasm</keyword>
<keyword id="KW-0903">Direct protein sequencing</keyword>
<keyword id="KW-0225">Disease variant</keyword>
<keyword id="KW-0256">Endoplasmic reticulum</keyword>
<keyword id="KW-0991">Intellectual disability</keyword>
<keyword id="KW-1017">Isopeptide bond</keyword>
<keyword id="KW-0492">Microsome</keyword>
<keyword id="KW-0507">mRNA processing</keyword>
<keyword id="KW-0508">mRNA splicing</keyword>
<keyword id="KW-0539">Nucleus</keyword>
<keyword id="KW-1267">Proteomics identification</keyword>
<keyword id="KW-1185">Reference proteome</keyword>
<keyword id="KW-0677">Repeat</keyword>
<keyword id="KW-0687">Ribonucleoprotein</keyword>
<keyword id="KW-0694">RNA-binding</keyword>
<keyword id="KW-0747">Spliceosome</keyword>
<keyword id="KW-0832">Ubl conjugation</keyword>
<evidence type="ECO:0000250" key="1">
    <source>
        <dbReference type="UniProtKB" id="Q7TMK9"/>
    </source>
</evidence>
<evidence type="ECO:0000255" key="2"/>
<evidence type="ECO:0000255" key="3">
    <source>
        <dbReference type="PROSITE-ProRule" id="PRU00176"/>
    </source>
</evidence>
<evidence type="ECO:0000256" key="4">
    <source>
        <dbReference type="SAM" id="MobiDB-lite"/>
    </source>
</evidence>
<evidence type="ECO:0000269" key="5">
    <source>
    </source>
</evidence>
<evidence type="ECO:0000269" key="6">
    <source>
    </source>
</evidence>
<evidence type="ECO:0000269" key="7">
    <source>
    </source>
</evidence>
<evidence type="ECO:0000269" key="8">
    <source>
    </source>
</evidence>
<evidence type="ECO:0000269" key="9">
    <source ref="5"/>
</evidence>
<evidence type="ECO:0000303" key="10">
    <source>
    </source>
</evidence>
<evidence type="ECO:0000303" key="11">
    <source>
    </source>
</evidence>
<evidence type="ECO:0000305" key="12"/>
<evidence type="ECO:0007744" key="13">
    <source>
    </source>
</evidence>
<evidence type="ECO:0007744" key="14">
    <source>
    </source>
</evidence>
<evidence type="ECO:0007744" key="15">
    <source>
    </source>
</evidence>
<evidence type="ECO:0007744" key="16">
    <source>
    </source>
</evidence>
<evidence type="ECO:0007744" key="17">
    <source>
    </source>
</evidence>
<evidence type="ECO:0007744" key="18">
    <source>
    </source>
</evidence>
<evidence type="ECO:0007744" key="19">
    <source>
    </source>
</evidence>
<evidence type="ECO:0007829" key="20">
    <source>
        <dbReference type="PDB" id="2DK2"/>
    </source>
</evidence>
<feature type="initiator methionine" description="Removed" evidence="9 13 15">
    <location>
        <position position="1"/>
    </location>
</feature>
<feature type="chain" id="PRO_0000081870" description="Heterogeneous nuclear ribonucleoprotein R">
    <location>
        <begin position="2"/>
        <end position="633"/>
    </location>
</feature>
<feature type="domain" description="RRM 1" evidence="3">
    <location>
        <begin position="165"/>
        <end position="244"/>
    </location>
</feature>
<feature type="domain" description="RRM 2" evidence="3">
    <location>
        <begin position="246"/>
        <end position="328"/>
    </location>
</feature>
<feature type="domain" description="RRM 3" evidence="3">
    <location>
        <begin position="341"/>
        <end position="411"/>
    </location>
</feature>
<feature type="repeat" description="1; approximate">
    <location>
        <begin position="462"/>
        <end position="471"/>
    </location>
</feature>
<feature type="repeat" description="2">
    <location>
        <begin position="472"/>
        <end position="482"/>
    </location>
</feature>
<feature type="repeat" description="3; approximate">
    <location>
        <begin position="488"/>
        <end position="497"/>
    </location>
</feature>
<feature type="region of interest" description="Disordered" evidence="4">
    <location>
        <begin position="1"/>
        <end position="24"/>
    </location>
</feature>
<feature type="region of interest" description="Disordered" evidence="4">
    <location>
        <begin position="412"/>
        <end position="456"/>
    </location>
</feature>
<feature type="region of interest" description="RNA-binding RGG-box">
    <location>
        <begin position="447"/>
        <end position="567"/>
    </location>
</feature>
<feature type="region of interest" description="3 X 11 AA approximate repeats of D-D-Y-Y-G-Y-D-Y-H-D-Y">
    <location>
        <begin position="462"/>
        <end position="497"/>
    </location>
</feature>
<feature type="region of interest" description="Disordered" evidence="4">
    <location>
        <begin position="501"/>
        <end position="633"/>
    </location>
</feature>
<feature type="short sequence motif" description="Nuclear localization signal" evidence="2">
    <location>
        <begin position="412"/>
        <end position="418"/>
    </location>
</feature>
<feature type="compositionally biased region" description="Pro residues" evidence="4">
    <location>
        <begin position="437"/>
        <end position="446"/>
    </location>
</feature>
<feature type="compositionally biased region" description="Gly residues" evidence="4">
    <location>
        <begin position="501"/>
        <end position="510"/>
    </location>
</feature>
<feature type="compositionally biased region" description="Pro residues" evidence="4">
    <location>
        <begin position="511"/>
        <end position="524"/>
    </location>
</feature>
<feature type="compositionally biased region" description="Low complexity" evidence="4">
    <location>
        <begin position="525"/>
        <end position="541"/>
    </location>
</feature>
<feature type="compositionally biased region" description="Gly residues" evidence="4">
    <location>
        <begin position="558"/>
        <end position="570"/>
    </location>
</feature>
<feature type="compositionally biased region" description="Polar residues" evidence="4">
    <location>
        <begin position="588"/>
        <end position="604"/>
    </location>
</feature>
<feature type="compositionally biased region" description="Low complexity" evidence="4">
    <location>
        <begin position="605"/>
        <end position="621"/>
    </location>
</feature>
<feature type="compositionally biased region" description="Polar residues" evidence="4">
    <location>
        <begin position="622"/>
        <end position="633"/>
    </location>
</feature>
<feature type="modified residue" description="N-acetylalanine" evidence="9 13 15">
    <location>
        <position position="2"/>
    </location>
</feature>
<feature type="modified residue" description="N6-acetyllysine" evidence="14">
    <location>
        <position position="366"/>
    </location>
</feature>
<feature type="cross-link" description="Glycyl lysine isopeptide (Lys-Gly) (interchain with G-Cter in SUMO2)" evidence="16 17 18 19">
    <location>
        <position position="13"/>
    </location>
</feature>
<feature type="cross-link" description="Glycyl lysine isopeptide (Lys-Gly) (interchain with G-Cter in SUMO2)" evidence="19">
    <location>
        <position position="171"/>
    </location>
</feature>
<feature type="cross-link" description="Glycyl lysine isopeptide (Lys-Gly) (interchain with G-Cter in SUMO2)" evidence="19">
    <location>
        <position position="359"/>
    </location>
</feature>
<feature type="splice variant" id="VSP_054703" description="In isoform 4." evidence="12">
    <location>
        <begin position="1"/>
        <end position="101"/>
    </location>
</feature>
<feature type="splice variant" id="VSP_047647" description="In isoform 3." evidence="11">
    <location>
        <begin position="129"/>
        <end position="166"/>
    </location>
</feature>
<feature type="splice variant" id="VSP_038360" description="In isoform 2 and isoform 4." evidence="10">
    <original>V</original>
    <variation>VTGL</variation>
    <location>
        <position position="269"/>
    </location>
</feature>
<feature type="sequence variant" id="VAR_087802" description="In NEDDFSB." evidence="8">
    <location>
        <begin position="552"/>
        <end position="633"/>
    </location>
</feature>
<feature type="sequence variant" id="VAR_087803" description="In NEDDFSB." evidence="8">
    <original>R</original>
    <variation>H</variation>
    <location>
        <position position="585"/>
    </location>
</feature>
<feature type="helix" evidence="20">
    <location>
        <begin position="334"/>
        <end position="338"/>
    </location>
</feature>
<feature type="strand" evidence="20">
    <location>
        <begin position="342"/>
        <end position="347"/>
    </location>
</feature>
<feature type="helix" evidence="20">
    <location>
        <begin position="354"/>
        <end position="362"/>
    </location>
</feature>
<feature type="strand" evidence="20">
    <location>
        <begin position="367"/>
        <end position="373"/>
    </location>
</feature>
<feature type="strand" evidence="20">
    <location>
        <begin position="376"/>
        <end position="383"/>
    </location>
</feature>
<feature type="helix" evidence="20">
    <location>
        <begin position="384"/>
        <end position="394"/>
    </location>
</feature>
<feature type="strand" evidence="20">
    <location>
        <begin position="405"/>
        <end position="408"/>
    </location>
</feature>
<reference key="1">
    <citation type="journal article" date="1998" name="Nucleic Acids Res.">
        <title>Molecular definition of heterogeneous nuclear ribonucleoprotein R (hnRNP R) using autoimmune antibody: immunological relationship with hnRNP P.</title>
        <authorList>
            <person name="Hassfeld W."/>
            <person name="Chan E.K.L."/>
            <person name="Mathison D.A."/>
            <person name="Portman D."/>
            <person name="Dreyfuss G."/>
            <person name="Steiner G."/>
            <person name="Tan E.M."/>
        </authorList>
    </citation>
    <scope>NUCLEOTIDE SEQUENCE [MRNA] (ISOFORM 1)</scope>
</reference>
<reference key="2">
    <citation type="journal article" date="2005" name="NeuroReport">
        <title>Cloning and expression of a novel isoform of heterogeneous nuclear ribonucleoprotein-R.</title>
        <authorList>
            <person name="Huang J."/>
            <person name="Chen X.H."/>
            <person name="Wu K."/>
            <person name="Xu P."/>
        </authorList>
    </citation>
    <scope>NUCLEOTIDE SEQUENCE [MRNA] (ISOFORM 3)</scope>
    <scope>TISSUE SPECIFICITY</scope>
    <source>
        <tissue>Brain</tissue>
    </source>
</reference>
<reference key="3">
    <citation type="journal article" date="2006" name="Nature">
        <title>The DNA sequence and biological annotation of human chromosome 1.</title>
        <authorList>
            <person name="Gregory S.G."/>
            <person name="Barlow K.F."/>
            <person name="McLay K.E."/>
            <person name="Kaul R."/>
            <person name="Swarbreck D."/>
            <person name="Dunham A."/>
            <person name="Scott C.E."/>
            <person name="Howe K.L."/>
            <person name="Woodfine K."/>
            <person name="Spencer C.C.A."/>
            <person name="Jones M.C."/>
            <person name="Gillson C."/>
            <person name="Searle S."/>
            <person name="Zhou Y."/>
            <person name="Kokocinski F."/>
            <person name="McDonald L."/>
            <person name="Evans R."/>
            <person name="Phillips K."/>
            <person name="Atkinson A."/>
            <person name="Cooper R."/>
            <person name="Jones C."/>
            <person name="Hall R.E."/>
            <person name="Andrews T.D."/>
            <person name="Lloyd C."/>
            <person name="Ainscough R."/>
            <person name="Almeida J.P."/>
            <person name="Ambrose K.D."/>
            <person name="Anderson F."/>
            <person name="Andrew R.W."/>
            <person name="Ashwell R.I.S."/>
            <person name="Aubin K."/>
            <person name="Babbage A.K."/>
            <person name="Bagguley C.L."/>
            <person name="Bailey J."/>
            <person name="Beasley H."/>
            <person name="Bethel G."/>
            <person name="Bird C.P."/>
            <person name="Bray-Allen S."/>
            <person name="Brown J.Y."/>
            <person name="Brown A.J."/>
            <person name="Buckley D."/>
            <person name="Burton J."/>
            <person name="Bye J."/>
            <person name="Carder C."/>
            <person name="Chapman J.C."/>
            <person name="Clark S.Y."/>
            <person name="Clarke G."/>
            <person name="Clee C."/>
            <person name="Cobley V."/>
            <person name="Collier R.E."/>
            <person name="Corby N."/>
            <person name="Coville G.J."/>
            <person name="Davies J."/>
            <person name="Deadman R."/>
            <person name="Dunn M."/>
            <person name="Earthrowl M."/>
            <person name="Ellington A.G."/>
            <person name="Errington H."/>
            <person name="Frankish A."/>
            <person name="Frankland J."/>
            <person name="French L."/>
            <person name="Garner P."/>
            <person name="Garnett J."/>
            <person name="Gay L."/>
            <person name="Ghori M.R.J."/>
            <person name="Gibson R."/>
            <person name="Gilby L.M."/>
            <person name="Gillett W."/>
            <person name="Glithero R.J."/>
            <person name="Grafham D.V."/>
            <person name="Griffiths C."/>
            <person name="Griffiths-Jones S."/>
            <person name="Grocock R."/>
            <person name="Hammond S."/>
            <person name="Harrison E.S.I."/>
            <person name="Hart E."/>
            <person name="Haugen E."/>
            <person name="Heath P.D."/>
            <person name="Holmes S."/>
            <person name="Holt K."/>
            <person name="Howden P.J."/>
            <person name="Hunt A.R."/>
            <person name="Hunt S.E."/>
            <person name="Hunter G."/>
            <person name="Isherwood J."/>
            <person name="James R."/>
            <person name="Johnson C."/>
            <person name="Johnson D."/>
            <person name="Joy A."/>
            <person name="Kay M."/>
            <person name="Kershaw J.K."/>
            <person name="Kibukawa M."/>
            <person name="Kimberley A.M."/>
            <person name="King A."/>
            <person name="Knights A.J."/>
            <person name="Lad H."/>
            <person name="Laird G."/>
            <person name="Lawlor S."/>
            <person name="Leongamornlert D.A."/>
            <person name="Lloyd D.M."/>
            <person name="Loveland J."/>
            <person name="Lovell J."/>
            <person name="Lush M.J."/>
            <person name="Lyne R."/>
            <person name="Martin S."/>
            <person name="Mashreghi-Mohammadi M."/>
            <person name="Matthews L."/>
            <person name="Matthews N.S.W."/>
            <person name="McLaren S."/>
            <person name="Milne S."/>
            <person name="Mistry S."/>
            <person name="Moore M.J.F."/>
            <person name="Nickerson T."/>
            <person name="O'Dell C.N."/>
            <person name="Oliver K."/>
            <person name="Palmeiri A."/>
            <person name="Palmer S.A."/>
            <person name="Parker A."/>
            <person name="Patel D."/>
            <person name="Pearce A.V."/>
            <person name="Peck A.I."/>
            <person name="Pelan S."/>
            <person name="Phelps K."/>
            <person name="Phillimore B.J."/>
            <person name="Plumb R."/>
            <person name="Rajan J."/>
            <person name="Raymond C."/>
            <person name="Rouse G."/>
            <person name="Saenphimmachak C."/>
            <person name="Sehra H.K."/>
            <person name="Sheridan E."/>
            <person name="Shownkeen R."/>
            <person name="Sims S."/>
            <person name="Skuce C.D."/>
            <person name="Smith M."/>
            <person name="Steward C."/>
            <person name="Subramanian S."/>
            <person name="Sycamore N."/>
            <person name="Tracey A."/>
            <person name="Tromans A."/>
            <person name="Van Helmond Z."/>
            <person name="Wall M."/>
            <person name="Wallis J.M."/>
            <person name="White S."/>
            <person name="Whitehead S.L."/>
            <person name="Wilkinson J.E."/>
            <person name="Willey D.L."/>
            <person name="Williams H."/>
            <person name="Wilming L."/>
            <person name="Wray P.W."/>
            <person name="Wu Z."/>
            <person name="Coulson A."/>
            <person name="Vaudin M."/>
            <person name="Sulston J.E."/>
            <person name="Durbin R.M."/>
            <person name="Hubbard T."/>
            <person name="Wooster R."/>
            <person name="Dunham I."/>
            <person name="Carter N.P."/>
            <person name="McVean G."/>
            <person name="Ross M.T."/>
            <person name="Harrow J."/>
            <person name="Olson M.V."/>
            <person name="Beck S."/>
            <person name="Rogers J."/>
            <person name="Bentley D.R."/>
        </authorList>
    </citation>
    <scope>NUCLEOTIDE SEQUENCE [LARGE SCALE GENOMIC DNA]</scope>
</reference>
<reference key="4">
    <citation type="journal article" date="2004" name="Genome Res.">
        <title>The status, quality, and expansion of the NIH full-length cDNA project: the Mammalian Gene Collection (MGC).</title>
        <authorList>
            <consortium name="The MGC Project Team"/>
        </authorList>
    </citation>
    <scope>NUCLEOTIDE SEQUENCE [LARGE SCALE MRNA] (ISOFORM 2)</scope>
    <source>
        <tissue>Placenta</tissue>
    </source>
</reference>
<reference key="5">
    <citation type="submission" date="2008-12" db="UniProtKB">
        <authorList>
            <person name="Bienvenut W.V."/>
            <person name="Lilla S."/>
            <person name="von Kriegsheim A."/>
            <person name="Lempens A."/>
            <person name="Kolch W."/>
        </authorList>
    </citation>
    <scope>PROTEIN SEQUENCE OF 2-13; 32-41; 70-84; 95-103; 134-145; 175-216; 225-255; 258-285; 290-300; 347-366; 373-384; 398-414 AND 428-441</scope>
    <scope>CLEAVAGE OF INITIATOR METHIONINE</scope>
    <scope>ACETYLATION AT ALA-2</scope>
    <scope>IDENTIFICATION BY MASS SPECTROMETRY</scope>
    <source>
        <tissue>Ovarian carcinoma</tissue>
    </source>
</reference>
<reference key="6">
    <citation type="submission" date="2009-01" db="UniProtKB">
        <authorList>
            <person name="Lubec G."/>
            <person name="Chen W.-Q."/>
        </authorList>
    </citation>
    <scope>PROTEIN SEQUENCE OF 32-41 AND 347-359</scope>
    <scope>IDENTIFICATION BY MASS SPECTROMETRY</scope>
    <source>
        <tissue>Fetal brain</tissue>
    </source>
</reference>
<reference key="7">
    <citation type="journal article" date="2002" name="RNA">
        <title>Purification and characterization of native spliceosomes suitable for three-dimensional structural analysis.</title>
        <authorList>
            <person name="Jurica M.S."/>
            <person name="Licklider L.J."/>
            <person name="Gygi S.P."/>
            <person name="Grigorieff N."/>
            <person name="Moore M.J."/>
        </authorList>
    </citation>
    <scope>IDENTIFICATION BY MASS SPECTROMETRY</scope>
    <scope>IDENTIFICATION IN THE SPLICEOSOMAL C COMPLEX</scope>
</reference>
<reference key="8">
    <citation type="journal article" date="2007" name="Mol. Cell. Proteomics">
        <title>Molecular composition of IMP1 ribonucleoprotein granules.</title>
        <authorList>
            <person name="Joeson L."/>
            <person name="Vikesaa J."/>
            <person name="Krogh A."/>
            <person name="Nielsen L.K."/>
            <person name="Hansen T."/>
            <person name="Borup R."/>
            <person name="Johnsen A.H."/>
            <person name="Christiansen J."/>
            <person name="Nielsen F.C."/>
        </authorList>
    </citation>
    <scope>IDENTIFICATION IN A MRNP GRANULE COMPLEX</scope>
    <scope>IDENTIFICATION BY MASS SPECTROMETRY</scope>
    <scope>SUBCELLULAR LOCATION</scope>
</reference>
<reference key="9">
    <citation type="journal article" date="2009" name="Anal. Chem.">
        <title>Lys-N and trypsin cover complementary parts of the phosphoproteome in a refined SCX-based approach.</title>
        <authorList>
            <person name="Gauci S."/>
            <person name="Helbig A.O."/>
            <person name="Slijper M."/>
            <person name="Krijgsveld J."/>
            <person name="Heck A.J."/>
            <person name="Mohammed S."/>
        </authorList>
    </citation>
    <scope>ACETYLATION [LARGE SCALE ANALYSIS] AT ALA-2</scope>
    <scope>CLEAVAGE OF INITIATOR METHIONINE [LARGE SCALE ANALYSIS]</scope>
    <scope>IDENTIFICATION BY MASS SPECTROMETRY [LARGE SCALE ANALYSIS]</scope>
</reference>
<reference key="10">
    <citation type="journal article" date="2009" name="Science">
        <title>Lysine acetylation targets protein complexes and co-regulates major cellular functions.</title>
        <authorList>
            <person name="Choudhary C."/>
            <person name="Kumar C."/>
            <person name="Gnad F."/>
            <person name="Nielsen M.L."/>
            <person name="Rehman M."/>
            <person name="Walther T.C."/>
            <person name="Olsen J.V."/>
            <person name="Mann M."/>
        </authorList>
    </citation>
    <scope>ACETYLATION [LARGE SCALE ANALYSIS] AT LYS-366</scope>
    <scope>IDENTIFICATION BY MASS SPECTROMETRY [LARGE SCALE ANALYSIS]</scope>
</reference>
<reference key="11">
    <citation type="journal article" date="2011" name="BMC Syst. Biol.">
        <title>Initial characterization of the human central proteome.</title>
        <authorList>
            <person name="Burkard T.R."/>
            <person name="Planyavsky M."/>
            <person name="Kaupe I."/>
            <person name="Breitwieser F.P."/>
            <person name="Buerckstuemmer T."/>
            <person name="Bennett K.L."/>
            <person name="Superti-Furga G."/>
            <person name="Colinge J."/>
        </authorList>
    </citation>
    <scope>IDENTIFICATION BY MASS SPECTROMETRY [LARGE SCALE ANALYSIS]</scope>
</reference>
<reference key="12">
    <citation type="journal article" date="2011" name="FASEB J.">
        <title>Modulation of exosome-mediated mRNA turnover by interaction of GTP-binding protein 1 (GTPBP1) with its target mRNAs.</title>
        <authorList>
            <person name="Woo K.C."/>
            <person name="Kim T.D."/>
            <person name="Lee K.H."/>
            <person name="Kim D.Y."/>
            <person name="Kim S."/>
            <person name="Lee H.R."/>
            <person name="Kang H.J."/>
            <person name="Chung S.J."/>
            <person name="Senju S."/>
            <person name="Nishimura Y."/>
            <person name="Kim K.T."/>
        </authorList>
    </citation>
    <scope>INTERACTION WITH GTPBP1</scope>
</reference>
<reference key="13">
    <citation type="journal article" date="2012" name="Mol. Cell. Proteomics">
        <title>Comparative large-scale characterisation of plant vs. mammal proteins reveals similar and idiosyncratic N-alpha acetylation features.</title>
        <authorList>
            <person name="Bienvenut W.V."/>
            <person name="Sumpton D."/>
            <person name="Martinez A."/>
            <person name="Lilla S."/>
            <person name="Espagne C."/>
            <person name="Meinnel T."/>
            <person name="Giglione C."/>
        </authorList>
    </citation>
    <scope>ACETYLATION [LARGE SCALE ANALYSIS] AT ALA-2</scope>
    <scope>CLEAVAGE OF INITIATOR METHIONINE [LARGE SCALE ANALYSIS]</scope>
    <scope>IDENTIFICATION BY MASS SPECTROMETRY [LARGE SCALE ANALYSIS]</scope>
</reference>
<reference key="14">
    <citation type="journal article" date="2013" name="J. Proteome Res.">
        <title>Toward a comprehensive characterization of a human cancer cell phosphoproteome.</title>
        <authorList>
            <person name="Zhou H."/>
            <person name="Di Palma S."/>
            <person name="Preisinger C."/>
            <person name="Peng M."/>
            <person name="Polat A.N."/>
            <person name="Heck A.J."/>
            <person name="Mohammed S."/>
        </authorList>
    </citation>
    <scope>IDENTIFICATION BY MASS SPECTROMETRY [LARGE SCALE ANALYSIS]</scope>
    <source>
        <tissue>Erythroleukemia</tissue>
    </source>
</reference>
<reference key="15">
    <citation type="journal article" date="2014" name="J. Proteomics">
        <title>An enzyme assisted RP-RPLC approach for in-depth analysis of human liver phosphoproteome.</title>
        <authorList>
            <person name="Bian Y."/>
            <person name="Song C."/>
            <person name="Cheng K."/>
            <person name="Dong M."/>
            <person name="Wang F."/>
            <person name="Huang J."/>
            <person name="Sun D."/>
            <person name="Wang L."/>
            <person name="Ye M."/>
            <person name="Zou H."/>
        </authorList>
    </citation>
    <scope>IDENTIFICATION BY MASS SPECTROMETRY [LARGE SCALE ANALYSIS]</scope>
    <source>
        <tissue>Liver</tissue>
    </source>
</reference>
<reference key="16">
    <citation type="journal article" date="2014" name="Nat. Struct. Mol. Biol.">
        <title>Uncovering global SUMOylation signaling networks in a site-specific manner.</title>
        <authorList>
            <person name="Hendriks I.A."/>
            <person name="D'Souza R.C."/>
            <person name="Yang B."/>
            <person name="Verlaan-de Vries M."/>
            <person name="Mann M."/>
            <person name="Vertegaal A.C."/>
        </authorList>
    </citation>
    <scope>SUMOYLATION [LARGE SCALE ANALYSIS] AT LYS-13</scope>
    <scope>IDENTIFICATION BY MASS SPECTROMETRY [LARGE SCALE ANALYSIS]</scope>
</reference>
<reference key="17">
    <citation type="journal article" date="2015" name="Cell Rep.">
        <title>SUMO-2 orchestrates chromatin modifiers in response to DNA damage.</title>
        <authorList>
            <person name="Hendriks I.A."/>
            <person name="Treffers L.W."/>
            <person name="Verlaan-de Vries M."/>
            <person name="Olsen J.V."/>
            <person name="Vertegaal A.C."/>
        </authorList>
    </citation>
    <scope>SUMOYLATION [LARGE SCALE ANALYSIS] AT LYS-13</scope>
    <scope>IDENTIFICATION BY MASS SPECTROMETRY [LARGE SCALE ANALYSIS]</scope>
</reference>
<reference key="18">
    <citation type="journal article" date="2015" name="Mol. Cell. Proteomics">
        <title>System-wide analysis of SUMOylation dynamics in response to replication stress reveals novel small ubiquitin-like modified target proteins and acceptor lysines relevant for genome stability.</title>
        <authorList>
            <person name="Xiao Z."/>
            <person name="Chang J.G."/>
            <person name="Hendriks I.A."/>
            <person name="Sigurdsson J.O."/>
            <person name="Olsen J.V."/>
            <person name="Vertegaal A.C."/>
        </authorList>
    </citation>
    <scope>SUMOYLATION [LARGE SCALE ANALYSIS] AT LYS-13</scope>
    <scope>IDENTIFICATION BY MASS SPECTROMETRY [LARGE SCALE ANALYSIS]</scope>
</reference>
<reference key="19">
    <citation type="journal article" date="2017" name="Nat. Struct. Mol. Biol.">
        <title>Site-specific mapping of the human SUMO proteome reveals co-modification with phosphorylation.</title>
        <authorList>
            <person name="Hendriks I.A."/>
            <person name="Lyon D."/>
            <person name="Young C."/>
            <person name="Jensen L.J."/>
            <person name="Vertegaal A.C."/>
            <person name="Nielsen M.L."/>
        </authorList>
    </citation>
    <scope>SUMOYLATION [LARGE SCALE ANALYSIS] AT LYS-13; LYS-171 AND LYS-359</scope>
    <scope>IDENTIFICATION BY MASS SPECTROMETRY [LARGE SCALE ANALYSIS]</scope>
</reference>
<reference key="20">
    <citation type="submission" date="2006-10" db="PDB data bank">
        <title>Solution structure of RRM domain in heterogeneous nuclear ribonucleoprotein R (HNRNP R).</title>
        <authorList>
            <consortium name="RIKEN structural genomics initiative (RSGI)"/>
        </authorList>
    </citation>
    <scope>STRUCTURE BY NMR OF 333-416</scope>
</reference>
<reference key="21">
    <citation type="journal article" date="2019" name="Am. J. Hum. Genet.">
        <title>HNRNPR variants that impair homeobox gene expression drive developmental disorders in humans.</title>
        <authorList>
            <person name="Duijkers F.A."/>
            <person name="McDonald A."/>
            <person name="Janssens G.E."/>
            <person name="Lezzerini M."/>
            <person name="Jongejan A."/>
            <person name="van Koningsbruggen S."/>
            <person name="Leeuwenburgh-Pronk W.G."/>
            <person name="Wlodarski M.W."/>
            <person name="Moutton S."/>
            <person name="Tran-Mau-Them F."/>
            <person name="Thauvin-Robinet C."/>
            <person name="Faivre L."/>
            <person name="Monaghan K.G."/>
            <person name="Smol T."/>
            <person name="Boute-Benejean O."/>
            <person name="Ladda R.L."/>
            <person name="Sell S.L."/>
            <person name="Bruel A.L."/>
            <person name="Houtkooper R.H."/>
            <person name="MacInnes A.W."/>
        </authorList>
    </citation>
    <scope>VARIANTS NEDDFSB 552-GLN--LYS-633 DEL AND HIS-585</scope>
    <scope>INVOLVEMENT IN NEDDFSB</scope>
    <scope>SUBCELLULAR LOCATION</scope>
</reference>
<gene>
    <name type="primary">HNRNPR</name>
    <name type="synonym">HNRPR</name>
</gene>
<proteinExistence type="evidence at protein level"/>
<dbReference type="EMBL" id="AF000364">
    <property type="protein sequence ID" value="AAC39540.1"/>
    <property type="molecule type" value="mRNA"/>
</dbReference>
<dbReference type="EMBL" id="DQ351905">
    <property type="protein sequence ID" value="ABC73063.1"/>
    <property type="molecule type" value="mRNA"/>
</dbReference>
<dbReference type="EMBL" id="AL109936">
    <property type="status" value="NOT_ANNOTATED_CDS"/>
    <property type="molecule type" value="Genomic_DNA"/>
</dbReference>
<dbReference type="EMBL" id="BC001449">
    <property type="protein sequence ID" value="AAH01449.1"/>
    <property type="molecule type" value="mRNA"/>
</dbReference>
<dbReference type="CCDS" id="CCDS232.1">
    <molecule id="O43390-1"/>
</dbReference>
<dbReference type="CCDS" id="CCDS44085.1">
    <molecule id="O43390-2"/>
</dbReference>
<dbReference type="CCDS" id="CCDS60020.1">
    <molecule id="O43390-4"/>
</dbReference>
<dbReference type="CCDS" id="CCDS72727.1">
    <molecule id="O43390-3"/>
</dbReference>
<dbReference type="PIR" id="T02673">
    <property type="entry name" value="T02673"/>
</dbReference>
<dbReference type="RefSeq" id="NP_001095868.1">
    <molecule id="O43390-2"/>
    <property type="nucleotide sequence ID" value="NM_001102398.3"/>
</dbReference>
<dbReference type="RefSeq" id="NP_001095869.1">
    <molecule id="O43390-4"/>
    <property type="nucleotide sequence ID" value="NM_001102399.3"/>
</dbReference>
<dbReference type="RefSeq" id="NP_001284549.1">
    <molecule id="O43390-3"/>
    <property type="nucleotide sequence ID" value="NM_001297620.2"/>
</dbReference>
<dbReference type="RefSeq" id="NP_005817.1">
    <molecule id="O43390-1"/>
    <property type="nucleotide sequence ID" value="NM_005826.5"/>
</dbReference>
<dbReference type="RefSeq" id="XP_005245768.1">
    <molecule id="O43390-1"/>
    <property type="nucleotide sequence ID" value="XM_005245711.6"/>
</dbReference>
<dbReference type="RefSeq" id="XP_011538773.1">
    <molecule id="O43390-2"/>
    <property type="nucleotide sequence ID" value="XM_011540471.4"/>
</dbReference>
<dbReference type="RefSeq" id="XP_016855497.1">
    <property type="nucleotide sequence ID" value="XM_017000008.1"/>
</dbReference>
<dbReference type="RefSeq" id="XP_054187879.1">
    <molecule id="O43390-2"/>
    <property type="nucleotide sequence ID" value="XM_054331904.1"/>
</dbReference>
<dbReference type="RefSeq" id="XP_054187880.1">
    <molecule id="O43390-1"/>
    <property type="nucleotide sequence ID" value="XM_054331905.1"/>
</dbReference>
<dbReference type="RefSeq" id="XP_054189735.1">
    <molecule id="O43390-2"/>
    <property type="nucleotide sequence ID" value="XM_054333760.1"/>
</dbReference>
<dbReference type="RefSeq" id="XP_054189736.1">
    <molecule id="O43390-1"/>
    <property type="nucleotide sequence ID" value="XM_054333761.1"/>
</dbReference>
<dbReference type="PDB" id="2DK2">
    <property type="method" value="NMR"/>
    <property type="chains" value="A=333-416"/>
</dbReference>
<dbReference type="PDBsum" id="2DK2"/>
<dbReference type="SMR" id="O43390"/>
<dbReference type="BioGRID" id="115530">
    <property type="interactions" value="565"/>
</dbReference>
<dbReference type="CORUM" id="O43390"/>
<dbReference type="FunCoup" id="O43390">
    <property type="interactions" value="4360"/>
</dbReference>
<dbReference type="IntAct" id="O43390">
    <property type="interactions" value="184"/>
</dbReference>
<dbReference type="MINT" id="O43390"/>
<dbReference type="STRING" id="9606.ENSP00000363745"/>
<dbReference type="GlyCosmos" id="O43390">
    <property type="glycosylation" value="1 site, 1 glycan"/>
</dbReference>
<dbReference type="GlyGen" id="O43390">
    <property type="glycosylation" value="2 sites, 1 O-linked glycan (2 sites)"/>
</dbReference>
<dbReference type="iPTMnet" id="O43390"/>
<dbReference type="MetOSite" id="O43390"/>
<dbReference type="PhosphoSitePlus" id="O43390"/>
<dbReference type="SwissPalm" id="O43390"/>
<dbReference type="BioMuta" id="HNRNPR"/>
<dbReference type="jPOST" id="O43390"/>
<dbReference type="MassIVE" id="O43390"/>
<dbReference type="PaxDb" id="9606-ENSP00000363745"/>
<dbReference type="PeptideAtlas" id="O43390"/>
<dbReference type="ProteomicsDB" id="48919">
    <molecule id="O43390-1"/>
</dbReference>
<dbReference type="ProteomicsDB" id="48920">
    <molecule id="O43390-2"/>
</dbReference>
<dbReference type="ProteomicsDB" id="61330"/>
<dbReference type="Pumba" id="O43390"/>
<dbReference type="TopDownProteomics" id="O43390-1">
    <molecule id="O43390-1"/>
</dbReference>
<dbReference type="Antibodypedia" id="3187">
    <property type="antibodies" value="177 antibodies from 29 providers"/>
</dbReference>
<dbReference type="DNASU" id="10236"/>
<dbReference type="Ensembl" id="ENST00000302271.11">
    <molecule id="O43390-1"/>
    <property type="protein sequence ID" value="ENSP00000304405.6"/>
    <property type="gene ID" value="ENSG00000125944.22"/>
</dbReference>
<dbReference type="Ensembl" id="ENST00000374612.5">
    <molecule id="O43390-1"/>
    <property type="protein sequence ID" value="ENSP00000363741.1"/>
    <property type="gene ID" value="ENSG00000125944.22"/>
</dbReference>
<dbReference type="Ensembl" id="ENST00000374616.7">
    <molecule id="O43390-2"/>
    <property type="protein sequence ID" value="ENSP00000363745.3"/>
    <property type="gene ID" value="ENSG00000125944.22"/>
</dbReference>
<dbReference type="Ensembl" id="ENST00000463552.6">
    <molecule id="O43390-3"/>
    <property type="protein sequence ID" value="ENSP00000502509.2"/>
    <property type="gene ID" value="ENSG00000125944.22"/>
</dbReference>
<dbReference type="Ensembl" id="ENST00000478691.5">
    <molecule id="O43390-4"/>
    <property type="protein sequence ID" value="ENSP00000474437.1"/>
    <property type="gene ID" value="ENSG00000125944.22"/>
</dbReference>
<dbReference type="Ensembl" id="ENST00000634263.1">
    <molecule id="O43390-1"/>
    <property type="protein sequence ID" value="ENSP00000489371.1"/>
    <property type="gene ID" value="ENSG00000282958.5"/>
</dbReference>
<dbReference type="Ensembl" id="ENST00000634634.2">
    <molecule id="O43390-3"/>
    <property type="protein sequence ID" value="ENSP00000488941.1"/>
    <property type="gene ID" value="ENSG00000282958.5"/>
</dbReference>
<dbReference type="Ensembl" id="ENST00000634713.1">
    <molecule id="O43390-2"/>
    <property type="protein sequence ID" value="ENSP00000488945.1"/>
    <property type="gene ID" value="ENSG00000282958.5"/>
</dbReference>
<dbReference type="Ensembl" id="ENST00000634766.2">
    <molecule id="O43390-1"/>
    <property type="protein sequence ID" value="ENSP00000489252.1"/>
    <property type="gene ID" value="ENSG00000282958.5"/>
</dbReference>
<dbReference type="Ensembl" id="ENST00000635150.1">
    <molecule id="O43390-4"/>
    <property type="protein sequence ID" value="ENSP00000489275.1"/>
    <property type="gene ID" value="ENSG00000282958.5"/>
</dbReference>
<dbReference type="GeneID" id="10236"/>
<dbReference type="KEGG" id="hsa:10236"/>
<dbReference type="MANE-Select" id="ENST00000302271.11">
    <property type="protein sequence ID" value="ENSP00000304405.6"/>
    <property type="RefSeq nucleotide sequence ID" value="NM_005826.5"/>
    <property type="RefSeq protein sequence ID" value="NP_005817.1"/>
</dbReference>
<dbReference type="UCSC" id="uc001bgp.5">
    <molecule id="O43390-1"/>
    <property type="organism name" value="human"/>
</dbReference>
<dbReference type="AGR" id="HGNC:5047"/>
<dbReference type="CTD" id="10236"/>
<dbReference type="DisGeNET" id="10236"/>
<dbReference type="GeneCards" id="HNRNPR"/>
<dbReference type="HGNC" id="HGNC:5047">
    <property type="gene designation" value="HNRNPR"/>
</dbReference>
<dbReference type="HPA" id="ENSG00000125944">
    <property type="expression patterns" value="Low tissue specificity"/>
</dbReference>
<dbReference type="MalaCards" id="HNRNPR"/>
<dbReference type="MIM" id="607201">
    <property type="type" value="gene"/>
</dbReference>
<dbReference type="MIM" id="620073">
    <property type="type" value="phenotype"/>
</dbReference>
<dbReference type="neXtProt" id="NX_O43390"/>
<dbReference type="OpenTargets" id="ENSG00000125944"/>
<dbReference type="Orphanet" id="662189">
    <property type="disease" value="Neurodevelopmental disorder-brain malformation-facial dysmorphism-brachydactyly syndrome"/>
</dbReference>
<dbReference type="PharmGKB" id="PA162391459"/>
<dbReference type="VEuPathDB" id="HostDB:ENSG00000125944"/>
<dbReference type="eggNOG" id="KOG0117">
    <property type="taxonomic scope" value="Eukaryota"/>
</dbReference>
<dbReference type="GeneTree" id="ENSGT00940000153511"/>
<dbReference type="HOGENOM" id="CLU_022960_2_1_1"/>
<dbReference type="InParanoid" id="O43390"/>
<dbReference type="OMA" id="NTAYEDY"/>
<dbReference type="OrthoDB" id="3800936at2759"/>
<dbReference type="PAN-GO" id="O43390">
    <property type="GO annotations" value="3 GO annotations based on evolutionary models"/>
</dbReference>
<dbReference type="PhylomeDB" id="O43390"/>
<dbReference type="TreeFam" id="TF314932"/>
<dbReference type="PathwayCommons" id="O43390"/>
<dbReference type="Reactome" id="R-HSA-72163">
    <property type="pathway name" value="mRNA Splicing - Major Pathway"/>
</dbReference>
<dbReference type="Reactome" id="R-HSA-72203">
    <property type="pathway name" value="Processing of Capped Intron-Containing Pre-mRNA"/>
</dbReference>
<dbReference type="SignaLink" id="O43390"/>
<dbReference type="BioGRID-ORCS" id="10236">
    <property type="hits" value="149 hits in 1159 CRISPR screens"/>
</dbReference>
<dbReference type="CD-CODE" id="1A18FFC4">
    <property type="entry name" value="Paraspeckle"/>
</dbReference>
<dbReference type="CD-CODE" id="232F8A39">
    <property type="entry name" value="P-body"/>
</dbReference>
<dbReference type="CD-CODE" id="91857CE7">
    <property type="entry name" value="Nucleolus"/>
</dbReference>
<dbReference type="CD-CODE" id="DEE660B4">
    <property type="entry name" value="Stress granule"/>
</dbReference>
<dbReference type="CD-CODE" id="F85A2E29">
    <property type="entry name" value="IMP1 RNP granule"/>
</dbReference>
<dbReference type="ChiTaRS" id="HNRNPR">
    <property type="organism name" value="human"/>
</dbReference>
<dbReference type="EvolutionaryTrace" id="O43390"/>
<dbReference type="GeneWiki" id="HNRNPR"/>
<dbReference type="GenomeRNAi" id="10236"/>
<dbReference type="Pharos" id="O43390">
    <property type="development level" value="Tbio"/>
</dbReference>
<dbReference type="PRO" id="PR:O43390"/>
<dbReference type="Proteomes" id="UP000005640">
    <property type="component" value="Chromosome 1"/>
</dbReference>
<dbReference type="RNAct" id="O43390">
    <property type="molecule type" value="protein"/>
</dbReference>
<dbReference type="Bgee" id="ENSG00000125944">
    <property type="expression patterns" value="Expressed in ventricular zone and 115 other cell types or tissues"/>
</dbReference>
<dbReference type="ExpressionAtlas" id="O43390">
    <property type="expression patterns" value="baseline and differential"/>
</dbReference>
<dbReference type="GO" id="GO:0071013">
    <property type="term" value="C:catalytic step 2 spliceosome"/>
    <property type="evidence" value="ECO:0000314"/>
    <property type="project" value="UniProtKB"/>
</dbReference>
<dbReference type="GO" id="GO:0005783">
    <property type="term" value="C:endoplasmic reticulum"/>
    <property type="evidence" value="ECO:0007669"/>
    <property type="project" value="UniProtKB-KW"/>
</dbReference>
<dbReference type="GO" id="GO:0005654">
    <property type="term" value="C:nucleoplasm"/>
    <property type="evidence" value="ECO:0000314"/>
    <property type="project" value="HPA"/>
</dbReference>
<dbReference type="GO" id="GO:0005634">
    <property type="term" value="C:nucleus"/>
    <property type="evidence" value="ECO:0000314"/>
    <property type="project" value="UniProtKB"/>
</dbReference>
<dbReference type="GO" id="GO:1990904">
    <property type="term" value="C:ribonucleoprotein complex"/>
    <property type="evidence" value="ECO:0000314"/>
    <property type="project" value="UniProtKB"/>
</dbReference>
<dbReference type="GO" id="GO:0005681">
    <property type="term" value="C:spliceosomal complex"/>
    <property type="evidence" value="ECO:0000303"/>
    <property type="project" value="UniProtKB"/>
</dbReference>
<dbReference type="GO" id="GO:0003729">
    <property type="term" value="F:mRNA binding"/>
    <property type="evidence" value="ECO:0000318"/>
    <property type="project" value="GO_Central"/>
</dbReference>
<dbReference type="GO" id="GO:0003723">
    <property type="term" value="F:RNA binding"/>
    <property type="evidence" value="ECO:0007005"/>
    <property type="project" value="UniProtKB"/>
</dbReference>
<dbReference type="GO" id="GO:0006397">
    <property type="term" value="P:mRNA processing"/>
    <property type="evidence" value="ECO:0000303"/>
    <property type="project" value="UniProtKB"/>
</dbReference>
<dbReference type="GO" id="GO:0000398">
    <property type="term" value="P:mRNA splicing, via spliceosome"/>
    <property type="evidence" value="ECO:0000305"/>
    <property type="project" value="UniProtKB"/>
</dbReference>
<dbReference type="CDD" id="cd21067">
    <property type="entry name" value="NURR_hnRNPR"/>
    <property type="match status" value="1"/>
</dbReference>
<dbReference type="CDD" id="cd12482">
    <property type="entry name" value="RRM1_hnRNPR"/>
    <property type="match status" value="1"/>
</dbReference>
<dbReference type="CDD" id="cd12488">
    <property type="entry name" value="RRM2_hnRNPR"/>
    <property type="match status" value="1"/>
</dbReference>
<dbReference type="CDD" id="cd12494">
    <property type="entry name" value="RRM3_hnRNPR"/>
    <property type="match status" value="1"/>
</dbReference>
<dbReference type="FunFam" id="3.30.70.330:FF:000023">
    <property type="entry name" value="Heterogeneous nuclear ribonucleoprotein q isoform"/>
    <property type="match status" value="1"/>
</dbReference>
<dbReference type="FunFam" id="3.30.70.330:FF:000024">
    <property type="entry name" value="Heterogeneous nuclear ribonucleoprotein q isoform"/>
    <property type="match status" value="1"/>
</dbReference>
<dbReference type="FunFam" id="3.30.70.330:FF:000027">
    <property type="entry name" value="Heterogeneous nuclear ribonucleoprotein q isoform"/>
    <property type="match status" value="1"/>
</dbReference>
<dbReference type="Gene3D" id="3.30.70.330">
    <property type="match status" value="3"/>
</dbReference>
<dbReference type="InterPro" id="IPR041337">
    <property type="entry name" value="hnRNP_Q_AcD"/>
</dbReference>
<dbReference type="InterPro" id="IPR006535">
    <property type="entry name" value="HnRNP_R/Q_splicing_fac"/>
</dbReference>
<dbReference type="InterPro" id="IPR034410">
    <property type="entry name" value="hnRNPR_RRM1"/>
</dbReference>
<dbReference type="InterPro" id="IPR034411">
    <property type="entry name" value="hnRNPR_RRM2"/>
</dbReference>
<dbReference type="InterPro" id="IPR012677">
    <property type="entry name" value="Nucleotide-bd_a/b_plait_sf"/>
</dbReference>
<dbReference type="InterPro" id="IPR035979">
    <property type="entry name" value="RBD_domain_sf"/>
</dbReference>
<dbReference type="InterPro" id="IPR000504">
    <property type="entry name" value="RRM_dom"/>
</dbReference>
<dbReference type="NCBIfam" id="TIGR01648">
    <property type="entry name" value="hnRNP-R-Q"/>
    <property type="match status" value="1"/>
</dbReference>
<dbReference type="PANTHER" id="PTHR21245">
    <property type="entry name" value="HETEROGENEOUS NUCLEAR RIBONUCLEOPROTEIN"/>
    <property type="match status" value="1"/>
</dbReference>
<dbReference type="Pfam" id="PF18360">
    <property type="entry name" value="hnRNP_Q_AcD"/>
    <property type="match status" value="1"/>
</dbReference>
<dbReference type="Pfam" id="PF00076">
    <property type="entry name" value="RRM_1"/>
    <property type="match status" value="3"/>
</dbReference>
<dbReference type="SMART" id="SM00360">
    <property type="entry name" value="RRM"/>
    <property type="match status" value="3"/>
</dbReference>
<dbReference type="SUPFAM" id="SSF54928">
    <property type="entry name" value="RNA-binding domain, RBD"/>
    <property type="match status" value="3"/>
</dbReference>
<dbReference type="PROSITE" id="PS50102">
    <property type="entry name" value="RRM"/>
    <property type="match status" value="3"/>
</dbReference>
<protein>
    <recommendedName>
        <fullName>Heterogeneous nuclear ribonucleoprotein R</fullName>
        <shortName>hnRNP R</shortName>
    </recommendedName>
</protein>